<name>PAGP_SALPC</name>
<keyword id="KW-0012">Acyltransferase</keyword>
<keyword id="KW-0998">Cell outer membrane</keyword>
<keyword id="KW-0472">Membrane</keyword>
<keyword id="KW-0732">Signal</keyword>
<keyword id="KW-0808">Transferase</keyword>
<gene>
    <name evidence="1" type="primary">pagP</name>
    <name type="ordered locus">SPC_0643</name>
</gene>
<comment type="function">
    <text evidence="1">Transfers a fatty acid residue from the sn-1 position of a phospholipid to the N-linked hydroxyfatty acid chain on the proximal unit of lipid A or its precursors.</text>
</comment>
<comment type="catalytic activity">
    <reaction evidence="1">
        <text>a lipid A + a 1,2-diacyl-sn-glycero-3-phosphocholine = a hepta-acyl lipid A + a 2-acyl-sn-glycero-3-phosphocholine</text>
        <dbReference type="Rhea" id="RHEA:74275"/>
        <dbReference type="ChEBI" id="CHEBI:57643"/>
        <dbReference type="ChEBI" id="CHEBI:57875"/>
        <dbReference type="ChEBI" id="CHEBI:193141"/>
        <dbReference type="ChEBI" id="CHEBI:193142"/>
        <dbReference type="EC" id="2.3.1.251"/>
    </reaction>
</comment>
<comment type="catalytic activity">
    <reaction evidence="1">
        <text>a lipid IVA + a 1,2-diacyl-sn-glycero-3-phosphocholine = a lipid IVB + a 2-acyl-sn-glycero-3-phosphocholine</text>
        <dbReference type="Rhea" id="RHEA:74279"/>
        <dbReference type="ChEBI" id="CHEBI:57643"/>
        <dbReference type="ChEBI" id="CHEBI:57875"/>
        <dbReference type="ChEBI" id="CHEBI:176425"/>
        <dbReference type="ChEBI" id="CHEBI:193143"/>
        <dbReference type="EC" id="2.3.1.251"/>
    </reaction>
</comment>
<comment type="catalytic activity">
    <reaction evidence="1">
        <text>a lipid IIA + a 1,2-diacyl-sn-glycero-3-phosphocholine = a lipid IIB + a 2-acyl-sn-glycero-3-phosphocholine</text>
        <dbReference type="Rhea" id="RHEA:74283"/>
        <dbReference type="ChEBI" id="CHEBI:57643"/>
        <dbReference type="ChEBI" id="CHEBI:57875"/>
        <dbReference type="ChEBI" id="CHEBI:193144"/>
        <dbReference type="ChEBI" id="CHEBI:193145"/>
        <dbReference type="EC" id="2.3.1.251"/>
    </reaction>
</comment>
<comment type="subunit">
    <text evidence="1">Homodimer.</text>
</comment>
<comment type="subcellular location">
    <subcellularLocation>
        <location evidence="1">Cell outer membrane</location>
    </subcellularLocation>
</comment>
<comment type="similarity">
    <text evidence="1">Belongs to the lipid A palmitoyltransferase family.</text>
</comment>
<protein>
    <recommendedName>
        <fullName evidence="1">Lipid A acyltransferase PagP</fullName>
        <ecNumber evidence="1">2.3.1.251</ecNumber>
    </recommendedName>
    <alternativeName>
        <fullName evidence="1">Lipid A acylation protein</fullName>
    </alternativeName>
</protein>
<feature type="signal peptide" evidence="1">
    <location>
        <begin position="1"/>
        <end position="32"/>
    </location>
</feature>
<feature type="chain" id="PRO_0000414471" description="Lipid A acyltransferase PagP">
    <location>
        <begin position="33"/>
        <end position="193"/>
    </location>
</feature>
<feature type="active site" evidence="1">
    <location>
        <position position="65"/>
    </location>
</feature>
<feature type="active site" evidence="1">
    <location>
        <position position="108"/>
    </location>
</feature>
<feature type="active site" evidence="1">
    <location>
        <position position="109"/>
    </location>
</feature>
<feature type="site" description="Role in lipopolysaccharide recognition" evidence="1">
    <location>
        <position position="74"/>
    </location>
</feature>
<feature type="site" description="Role in the phospholipid gating" evidence="1">
    <location>
        <position position="179"/>
    </location>
</feature>
<proteinExistence type="inferred from homology"/>
<accession>C0PW57</accession>
<dbReference type="EC" id="2.3.1.251" evidence="1"/>
<dbReference type="EMBL" id="CP000857">
    <property type="protein sequence ID" value="ACN44820.1"/>
    <property type="molecule type" value="Genomic_DNA"/>
</dbReference>
<dbReference type="SMR" id="C0PW57"/>
<dbReference type="KEGG" id="sei:SPC_0643"/>
<dbReference type="HOGENOM" id="CLU_104099_0_0_6"/>
<dbReference type="Proteomes" id="UP000001599">
    <property type="component" value="Chromosome"/>
</dbReference>
<dbReference type="GO" id="GO:0009279">
    <property type="term" value="C:cell outer membrane"/>
    <property type="evidence" value="ECO:0007669"/>
    <property type="project" value="UniProtKB-SubCell"/>
</dbReference>
<dbReference type="GO" id="GO:0016746">
    <property type="term" value="F:acyltransferase activity"/>
    <property type="evidence" value="ECO:0007669"/>
    <property type="project" value="UniProtKB-UniRule"/>
</dbReference>
<dbReference type="GO" id="GO:0009245">
    <property type="term" value="P:lipid A biosynthetic process"/>
    <property type="evidence" value="ECO:0007669"/>
    <property type="project" value="UniProtKB-UniRule"/>
</dbReference>
<dbReference type="FunFam" id="2.40.160.20:FF:000002">
    <property type="entry name" value="Lipid A palmitoyltransferase PagP"/>
    <property type="match status" value="1"/>
</dbReference>
<dbReference type="Gene3D" id="2.40.160.20">
    <property type="match status" value="1"/>
</dbReference>
<dbReference type="HAMAP" id="MF_00837">
    <property type="entry name" value="PagP_transferase"/>
    <property type="match status" value="1"/>
</dbReference>
<dbReference type="InterPro" id="IPR009746">
    <property type="entry name" value="LipidA_acyl_PagP"/>
</dbReference>
<dbReference type="InterPro" id="IPR011250">
    <property type="entry name" value="OMP/PagP_b-brl"/>
</dbReference>
<dbReference type="NCBIfam" id="NF008271">
    <property type="entry name" value="PRK11045.1"/>
    <property type="match status" value="1"/>
</dbReference>
<dbReference type="Pfam" id="PF07017">
    <property type="entry name" value="PagP"/>
    <property type="match status" value="1"/>
</dbReference>
<dbReference type="SUPFAM" id="SSF56925">
    <property type="entry name" value="OMPA-like"/>
    <property type="match status" value="1"/>
</dbReference>
<reference key="1">
    <citation type="journal article" date="2009" name="PLoS ONE">
        <title>Salmonella paratyphi C: genetic divergence from Salmonella choleraesuis and pathogenic convergence with Salmonella typhi.</title>
        <authorList>
            <person name="Liu W.-Q."/>
            <person name="Feng Y."/>
            <person name="Wang Y."/>
            <person name="Zou Q.-H."/>
            <person name="Chen F."/>
            <person name="Guo J.-T."/>
            <person name="Peng Y.-H."/>
            <person name="Jin Y."/>
            <person name="Li Y.-G."/>
            <person name="Hu S.-N."/>
            <person name="Johnston R.N."/>
            <person name="Liu G.-R."/>
            <person name="Liu S.-L."/>
        </authorList>
    </citation>
    <scope>NUCLEOTIDE SEQUENCE [LARGE SCALE GENOMIC DNA]</scope>
    <source>
        <strain>RKS4594</strain>
    </source>
</reference>
<sequence length="193" mass="22424">MNGMAVVMIIRKYFLIIALLVMPWLAIPSVSAADKGGFNTFTDNVAETWRQPEHYDLYVPAITWHARFAYDKEKTDRYNERPWGVGFGQSRWDDKGNWHGLYMMAFKDSFNKWEPIGGYGWEKTWRPLEDDNFRLGLGFTAGVTARDNWNYIPIPVLLPLASIGYGPATFQMTYIPGSYNNGNVYFAWMRFQF</sequence>
<evidence type="ECO:0000255" key="1">
    <source>
        <dbReference type="HAMAP-Rule" id="MF_00837"/>
    </source>
</evidence>
<organism>
    <name type="scientific">Salmonella paratyphi C (strain RKS4594)</name>
    <dbReference type="NCBI Taxonomy" id="476213"/>
    <lineage>
        <taxon>Bacteria</taxon>
        <taxon>Pseudomonadati</taxon>
        <taxon>Pseudomonadota</taxon>
        <taxon>Gammaproteobacteria</taxon>
        <taxon>Enterobacterales</taxon>
        <taxon>Enterobacteriaceae</taxon>
        <taxon>Salmonella</taxon>
    </lineage>
</organism>